<dbReference type="EC" id="2.4.99.17" evidence="1"/>
<dbReference type="EMBL" id="CP000141">
    <property type="protein sequence ID" value="ABB15057.1"/>
    <property type="molecule type" value="Genomic_DNA"/>
</dbReference>
<dbReference type="RefSeq" id="WP_011344423.1">
    <property type="nucleotide sequence ID" value="NC_007503.1"/>
</dbReference>
<dbReference type="SMR" id="Q3ABY6"/>
<dbReference type="FunCoup" id="Q3ABY6">
    <property type="interactions" value="318"/>
</dbReference>
<dbReference type="STRING" id="246194.CHY_1516"/>
<dbReference type="KEGG" id="chy:CHY_1516"/>
<dbReference type="eggNOG" id="COG0809">
    <property type="taxonomic scope" value="Bacteria"/>
</dbReference>
<dbReference type="HOGENOM" id="CLU_039110_1_0_9"/>
<dbReference type="InParanoid" id="Q3ABY6"/>
<dbReference type="OrthoDB" id="9805933at2"/>
<dbReference type="UniPathway" id="UPA00392"/>
<dbReference type="Proteomes" id="UP000002706">
    <property type="component" value="Chromosome"/>
</dbReference>
<dbReference type="GO" id="GO:0005737">
    <property type="term" value="C:cytoplasm"/>
    <property type="evidence" value="ECO:0007669"/>
    <property type="project" value="UniProtKB-SubCell"/>
</dbReference>
<dbReference type="GO" id="GO:0051075">
    <property type="term" value="F:S-adenosylmethionine:tRNA ribosyltransferase-isomerase activity"/>
    <property type="evidence" value="ECO:0007669"/>
    <property type="project" value="UniProtKB-EC"/>
</dbReference>
<dbReference type="GO" id="GO:0008616">
    <property type="term" value="P:queuosine biosynthetic process"/>
    <property type="evidence" value="ECO:0007669"/>
    <property type="project" value="UniProtKB-UniRule"/>
</dbReference>
<dbReference type="GO" id="GO:0002099">
    <property type="term" value="P:tRNA wobble guanine modification"/>
    <property type="evidence" value="ECO:0007669"/>
    <property type="project" value="TreeGrafter"/>
</dbReference>
<dbReference type="FunFam" id="2.40.10.240:FF:000002">
    <property type="entry name" value="S-adenosylmethionine:tRNA ribosyltransferase-isomerase"/>
    <property type="match status" value="1"/>
</dbReference>
<dbReference type="FunFam" id="3.40.1780.10:FF:000001">
    <property type="entry name" value="S-adenosylmethionine:tRNA ribosyltransferase-isomerase"/>
    <property type="match status" value="1"/>
</dbReference>
<dbReference type="Gene3D" id="2.40.10.240">
    <property type="entry name" value="QueA-like"/>
    <property type="match status" value="1"/>
</dbReference>
<dbReference type="Gene3D" id="3.40.1780.10">
    <property type="entry name" value="QueA-like"/>
    <property type="match status" value="1"/>
</dbReference>
<dbReference type="HAMAP" id="MF_00113">
    <property type="entry name" value="QueA"/>
    <property type="match status" value="1"/>
</dbReference>
<dbReference type="InterPro" id="IPR003699">
    <property type="entry name" value="QueA"/>
</dbReference>
<dbReference type="InterPro" id="IPR042118">
    <property type="entry name" value="QueA_dom1"/>
</dbReference>
<dbReference type="InterPro" id="IPR042119">
    <property type="entry name" value="QueA_dom2"/>
</dbReference>
<dbReference type="InterPro" id="IPR036100">
    <property type="entry name" value="QueA_sf"/>
</dbReference>
<dbReference type="NCBIfam" id="NF001140">
    <property type="entry name" value="PRK00147.1"/>
    <property type="match status" value="1"/>
</dbReference>
<dbReference type="NCBIfam" id="TIGR00113">
    <property type="entry name" value="queA"/>
    <property type="match status" value="1"/>
</dbReference>
<dbReference type="PANTHER" id="PTHR30307">
    <property type="entry name" value="S-ADENOSYLMETHIONINE:TRNA RIBOSYLTRANSFERASE-ISOMERASE"/>
    <property type="match status" value="1"/>
</dbReference>
<dbReference type="PANTHER" id="PTHR30307:SF0">
    <property type="entry name" value="S-ADENOSYLMETHIONINE:TRNA RIBOSYLTRANSFERASE-ISOMERASE"/>
    <property type="match status" value="1"/>
</dbReference>
<dbReference type="Pfam" id="PF02547">
    <property type="entry name" value="Queuosine_synth"/>
    <property type="match status" value="1"/>
</dbReference>
<dbReference type="SUPFAM" id="SSF111337">
    <property type="entry name" value="QueA-like"/>
    <property type="match status" value="1"/>
</dbReference>
<comment type="function">
    <text evidence="1">Transfers and isomerizes the ribose moiety from AdoMet to the 7-aminomethyl group of 7-deazaguanine (preQ1-tRNA) to give epoxyqueuosine (oQ-tRNA).</text>
</comment>
<comment type="catalytic activity">
    <reaction evidence="1">
        <text>7-aminomethyl-7-carbaguanosine(34) in tRNA + S-adenosyl-L-methionine = epoxyqueuosine(34) in tRNA + adenine + L-methionine + 2 H(+)</text>
        <dbReference type="Rhea" id="RHEA:32155"/>
        <dbReference type="Rhea" id="RHEA-COMP:10342"/>
        <dbReference type="Rhea" id="RHEA-COMP:18582"/>
        <dbReference type="ChEBI" id="CHEBI:15378"/>
        <dbReference type="ChEBI" id="CHEBI:16708"/>
        <dbReference type="ChEBI" id="CHEBI:57844"/>
        <dbReference type="ChEBI" id="CHEBI:59789"/>
        <dbReference type="ChEBI" id="CHEBI:82833"/>
        <dbReference type="ChEBI" id="CHEBI:194443"/>
        <dbReference type="EC" id="2.4.99.17"/>
    </reaction>
</comment>
<comment type="pathway">
    <text evidence="1">tRNA modification; tRNA-queuosine biosynthesis.</text>
</comment>
<comment type="subunit">
    <text evidence="1">Monomer.</text>
</comment>
<comment type="subcellular location">
    <subcellularLocation>
        <location evidence="1">Cytoplasm</location>
    </subcellularLocation>
</comment>
<comment type="similarity">
    <text evidence="1">Belongs to the QueA family.</text>
</comment>
<accession>Q3ABY6</accession>
<gene>
    <name evidence="1" type="primary">queA</name>
    <name type="ordered locus">CHY_1516</name>
</gene>
<feature type="chain" id="PRO_0000231327" description="S-adenosylmethionine:tRNA ribosyltransferase-isomerase">
    <location>
        <begin position="1"/>
        <end position="338"/>
    </location>
</feature>
<keyword id="KW-0963">Cytoplasm</keyword>
<keyword id="KW-0671">Queuosine biosynthesis</keyword>
<keyword id="KW-1185">Reference proteome</keyword>
<keyword id="KW-0949">S-adenosyl-L-methionine</keyword>
<keyword id="KW-0808">Transferase</keyword>
<organism>
    <name type="scientific">Carboxydothermus hydrogenoformans (strain ATCC BAA-161 / DSM 6008 / Z-2901)</name>
    <dbReference type="NCBI Taxonomy" id="246194"/>
    <lineage>
        <taxon>Bacteria</taxon>
        <taxon>Bacillati</taxon>
        <taxon>Bacillota</taxon>
        <taxon>Clostridia</taxon>
        <taxon>Thermoanaerobacterales</taxon>
        <taxon>Thermoanaerobacteraceae</taxon>
        <taxon>Carboxydothermus</taxon>
    </lineage>
</organism>
<proteinExistence type="inferred from homology"/>
<evidence type="ECO:0000255" key="1">
    <source>
        <dbReference type="HAMAP-Rule" id="MF_00113"/>
    </source>
</evidence>
<reference key="1">
    <citation type="journal article" date="2005" name="PLoS Genet.">
        <title>Life in hot carbon monoxide: the complete genome sequence of Carboxydothermus hydrogenoformans Z-2901.</title>
        <authorList>
            <person name="Wu M."/>
            <person name="Ren Q."/>
            <person name="Durkin A.S."/>
            <person name="Daugherty S.C."/>
            <person name="Brinkac L.M."/>
            <person name="Dodson R.J."/>
            <person name="Madupu R."/>
            <person name="Sullivan S.A."/>
            <person name="Kolonay J.F."/>
            <person name="Nelson W.C."/>
            <person name="Tallon L.J."/>
            <person name="Jones K.M."/>
            <person name="Ulrich L.E."/>
            <person name="Gonzalez J.M."/>
            <person name="Zhulin I.B."/>
            <person name="Robb F.T."/>
            <person name="Eisen J.A."/>
        </authorList>
    </citation>
    <scope>NUCLEOTIDE SEQUENCE [LARGE SCALE GENOMIC DNA]</scope>
    <source>
        <strain>ATCC BAA-161 / DSM 6008 / Z-2901</strain>
    </source>
</reference>
<protein>
    <recommendedName>
        <fullName evidence="1">S-adenosylmethionine:tRNA ribosyltransferase-isomerase</fullName>
        <ecNumber evidence="1">2.4.99.17</ecNumber>
    </recommendedName>
    <alternativeName>
        <fullName evidence="1">Queuosine biosynthesis protein QueA</fullName>
    </alternativeName>
</protein>
<sequence>MKLKDFDYYLPEELIAQTPLEKRDESRLLVLKRQTGEITHDVFKNLKKYLVPGDLLVVNKTRVIPARLFGVREQGGEVEILLVKRMNFREWEVLVKPGRRARVGTRLIFAPGVLEGEIVAQTEVGRIIKFSFQGVFEEILNQLGQTPLPPYIKEKLKDPERYQTIYAKEPGSAAAPTAGLHFTRELISELKDYGVEFAEVLLHVGLGTFKPVKTENILEHKMHEEYYEIENEAAEKVNKAKREGRRVIAVGTTVVRVLESVADKGQVAPAKGYTDLFIYPGFNFQIIDGLITNFHLPKSTLLMLVSAFAGREKVLNAYEIAVRLRYRFFSFGDAMLII</sequence>
<name>QUEA_CARHZ</name>